<feature type="chain" id="PRO_0000197751" description="Lateral eye opsin">
    <location>
        <begin position="1"/>
        <end position="376"/>
    </location>
</feature>
<feature type="topological domain" description="Extracellular">
    <location>
        <begin position="1"/>
        <end position="46"/>
    </location>
</feature>
<feature type="transmembrane region" description="Helical; Name=1" evidence="2">
    <location>
        <begin position="47"/>
        <end position="71"/>
    </location>
</feature>
<feature type="topological domain" description="Cytoplasmic">
    <location>
        <begin position="72"/>
        <end position="83"/>
    </location>
</feature>
<feature type="transmembrane region" description="Helical; Name=2" evidence="2">
    <location>
        <begin position="84"/>
        <end position="108"/>
    </location>
</feature>
<feature type="topological domain" description="Extracellular">
    <location>
        <begin position="109"/>
        <end position="123"/>
    </location>
</feature>
<feature type="transmembrane region" description="Helical; Name=3" evidence="2">
    <location>
        <begin position="124"/>
        <end position="143"/>
    </location>
</feature>
<feature type="topological domain" description="Cytoplasmic">
    <location>
        <begin position="144"/>
        <end position="162"/>
    </location>
</feature>
<feature type="transmembrane region" description="Helical; Name=4" evidence="2">
    <location>
        <begin position="163"/>
        <end position="186"/>
    </location>
</feature>
<feature type="topological domain" description="Extracellular">
    <location>
        <begin position="187"/>
        <end position="210"/>
    </location>
</feature>
<feature type="transmembrane region" description="Helical; Name=5" evidence="2">
    <location>
        <begin position="211"/>
        <end position="238"/>
    </location>
</feature>
<feature type="topological domain" description="Cytoplasmic">
    <location>
        <begin position="239"/>
        <end position="274"/>
    </location>
</feature>
<feature type="transmembrane region" description="Helical; Name=6" evidence="2">
    <location>
        <begin position="275"/>
        <end position="298"/>
    </location>
</feature>
<feature type="topological domain" description="Extracellular">
    <location>
        <begin position="299"/>
        <end position="306"/>
    </location>
</feature>
<feature type="transmembrane region" description="Helical; Name=7" evidence="2">
    <location>
        <begin position="307"/>
        <end position="331"/>
    </location>
</feature>
<feature type="topological domain" description="Cytoplasmic">
    <location>
        <begin position="332"/>
        <end position="376"/>
    </location>
</feature>
<feature type="region of interest" description="Disordered" evidence="4">
    <location>
        <begin position="349"/>
        <end position="376"/>
    </location>
</feature>
<feature type="compositionally biased region" description="Basic and acidic residues" evidence="4">
    <location>
        <begin position="367"/>
        <end position="376"/>
    </location>
</feature>
<feature type="modified residue" description="N6-(retinylidene)lysine" evidence="1">
    <location>
        <position position="318"/>
    </location>
</feature>
<feature type="glycosylation site" description="N-linked (GlcNAc...) asparagine" evidence="2">
    <location>
        <position position="17"/>
    </location>
</feature>
<feature type="glycosylation site" description="N-linked (GlcNAc...) asparagine" evidence="2">
    <location>
        <position position="193"/>
    </location>
</feature>
<feature type="disulfide bond" evidence="3">
    <location>
        <begin position="120"/>
        <end position="197"/>
    </location>
</feature>
<organism>
    <name type="scientific">Limulus polyphemus</name>
    <name type="common">Atlantic horseshoe crab</name>
    <dbReference type="NCBI Taxonomy" id="6850"/>
    <lineage>
        <taxon>Eukaryota</taxon>
        <taxon>Metazoa</taxon>
        <taxon>Ecdysozoa</taxon>
        <taxon>Arthropoda</taxon>
        <taxon>Chelicerata</taxon>
        <taxon>Merostomata</taxon>
        <taxon>Xiphosura</taxon>
        <taxon>Limulidae</taxon>
        <taxon>Limulus</taxon>
    </lineage>
</organism>
<proteinExistence type="evidence at protein level"/>
<reference key="1">
    <citation type="journal article" date="1993" name="Proc. Natl. Acad. Sci. U.S.A.">
        <title>Opsins from the lateral eyes and ocelli of the horseshoe crab, Limulus polyphemus.</title>
        <authorList>
            <person name="Smith W.C."/>
            <person name="Price D.A."/>
            <person name="Greenberg R.M."/>
            <person name="Battelle B.-A."/>
        </authorList>
    </citation>
    <scope>NUCLEOTIDE SEQUENCE [MRNA]</scope>
    <source>
        <tissue>Lateral eye</tissue>
    </source>
</reference>
<comment type="function">
    <text>Visual pigments are the light-absorbing molecules that mediate vision. They consist of an apoprotein, opsin, covalently linked to cis-retinal.</text>
</comment>
<comment type="biophysicochemical properties">
    <absorption>
        <max>520 nm</max>
    </absorption>
</comment>
<comment type="subcellular location">
    <subcellularLocation>
        <location>Membrane</location>
        <topology>Multi-pass membrane protein</topology>
    </subcellularLocation>
</comment>
<comment type="tissue specificity">
    <text>Lateral eye.</text>
</comment>
<comment type="PTM">
    <text evidence="1">Phosphorylated on some or all of the serine and threonine residues present in the C-terminal region.</text>
</comment>
<comment type="similarity">
    <text evidence="3">Belongs to the G-protein coupled receptor 1 family. Opsin subfamily.</text>
</comment>
<sequence length="376" mass="42140">MANQLSYSSLGWPYQPNASVVDTMPKEMLYMIHEHWYAFPPMNPLWYSILGVAMIILGIICVLGNGMVIYLMMTTKSLRTPTNLLVVNLAFSDFCMMAFMMPTMTSNCFAETWILGPFMCEVYGMAGSLFGCASIWSMVMITLDRYNVIVRGMAAAPLTHKKATLLLLFVWIWSGGWTILPFFGWSRYVPEGNLTSCTVDYLTKDWSSASYVVIYGLAVYFLPLITMIYCYFFIVHAVAEHEKQLREQAKKMNVASLRANADQQKQSAECRLAKVAMMTVGLWFMAWTPYLIISWAGVFSSGTRLTPLATIWGSVFAKANSCYNPIVYGISHPRYKAALYQRFPSLACGSGESGSDVKSEASATTTMEEKPKIPEA</sequence>
<name>OPSL_LIMPO</name>
<accession>P35360</accession>
<evidence type="ECO:0000250" key="1"/>
<evidence type="ECO:0000255" key="2"/>
<evidence type="ECO:0000255" key="3">
    <source>
        <dbReference type="PROSITE-ProRule" id="PRU00521"/>
    </source>
</evidence>
<evidence type="ECO:0000256" key="4">
    <source>
        <dbReference type="SAM" id="MobiDB-lite"/>
    </source>
</evidence>
<dbReference type="EMBL" id="L03791">
    <property type="protein sequence ID" value="AAA28273.1"/>
    <property type="molecule type" value="mRNA"/>
</dbReference>
<dbReference type="EMBL" id="L03781">
    <property type="protein sequence ID" value="AAA02498.1"/>
    <property type="molecule type" value="mRNA"/>
</dbReference>
<dbReference type="PIR" id="B48197">
    <property type="entry name" value="B48197"/>
</dbReference>
<dbReference type="SMR" id="P35360"/>
<dbReference type="OrthoDB" id="9996086at2759"/>
<dbReference type="Proteomes" id="UP000694941">
    <property type="component" value="Unplaced"/>
</dbReference>
<dbReference type="GO" id="GO:0016020">
    <property type="term" value="C:membrane"/>
    <property type="evidence" value="ECO:0007669"/>
    <property type="project" value="UniProtKB-SubCell"/>
</dbReference>
<dbReference type="GO" id="GO:0004930">
    <property type="term" value="F:G protein-coupled receptor activity"/>
    <property type="evidence" value="ECO:0007669"/>
    <property type="project" value="UniProtKB-KW"/>
</dbReference>
<dbReference type="GO" id="GO:0009881">
    <property type="term" value="F:photoreceptor activity"/>
    <property type="evidence" value="ECO:0007669"/>
    <property type="project" value="UniProtKB-KW"/>
</dbReference>
<dbReference type="GO" id="GO:0007602">
    <property type="term" value="P:phototransduction"/>
    <property type="evidence" value="ECO:0007669"/>
    <property type="project" value="UniProtKB-KW"/>
</dbReference>
<dbReference type="GO" id="GO:0007601">
    <property type="term" value="P:visual perception"/>
    <property type="evidence" value="ECO:0007669"/>
    <property type="project" value="UniProtKB-KW"/>
</dbReference>
<dbReference type="CDD" id="cd15079">
    <property type="entry name" value="7tmA_photoreceptors_insect"/>
    <property type="match status" value="1"/>
</dbReference>
<dbReference type="FunFam" id="1.20.1070.10:FF:000044">
    <property type="entry name" value="Opsin, ultraviolet-sensitive"/>
    <property type="match status" value="1"/>
</dbReference>
<dbReference type="Gene3D" id="1.20.1070.10">
    <property type="entry name" value="Rhodopsin 7-helix transmembrane proteins"/>
    <property type="match status" value="1"/>
</dbReference>
<dbReference type="InterPro" id="IPR050125">
    <property type="entry name" value="GPCR_opsins"/>
</dbReference>
<dbReference type="InterPro" id="IPR000276">
    <property type="entry name" value="GPCR_Rhodpsn"/>
</dbReference>
<dbReference type="InterPro" id="IPR017452">
    <property type="entry name" value="GPCR_Rhodpsn_7TM"/>
</dbReference>
<dbReference type="InterPro" id="IPR001760">
    <property type="entry name" value="Opsin"/>
</dbReference>
<dbReference type="InterPro" id="IPR001391">
    <property type="entry name" value="Opsin_lateye"/>
</dbReference>
<dbReference type="InterPro" id="IPR027430">
    <property type="entry name" value="Retinal_BS"/>
</dbReference>
<dbReference type="PANTHER" id="PTHR24240">
    <property type="entry name" value="OPSIN"/>
    <property type="match status" value="1"/>
</dbReference>
<dbReference type="Pfam" id="PF00001">
    <property type="entry name" value="7tm_1"/>
    <property type="match status" value="1"/>
</dbReference>
<dbReference type="PRINTS" id="PR00237">
    <property type="entry name" value="GPCRRHODOPSN"/>
</dbReference>
<dbReference type="PRINTS" id="PR00238">
    <property type="entry name" value="OPSIN"/>
</dbReference>
<dbReference type="PRINTS" id="PR00578">
    <property type="entry name" value="OPSINLTRLEYE"/>
</dbReference>
<dbReference type="SMART" id="SM01381">
    <property type="entry name" value="7TM_GPCR_Srsx"/>
    <property type="match status" value="1"/>
</dbReference>
<dbReference type="SUPFAM" id="SSF81321">
    <property type="entry name" value="Family A G protein-coupled receptor-like"/>
    <property type="match status" value="1"/>
</dbReference>
<dbReference type="PROSITE" id="PS00237">
    <property type="entry name" value="G_PROTEIN_RECEP_F1_1"/>
    <property type="match status" value="1"/>
</dbReference>
<dbReference type="PROSITE" id="PS50262">
    <property type="entry name" value="G_PROTEIN_RECEP_F1_2"/>
    <property type="match status" value="1"/>
</dbReference>
<dbReference type="PROSITE" id="PS00238">
    <property type="entry name" value="OPSIN"/>
    <property type="match status" value="1"/>
</dbReference>
<protein>
    <recommendedName>
        <fullName>Lateral eye opsin</fullName>
    </recommendedName>
</protein>
<keyword id="KW-0157">Chromophore</keyword>
<keyword id="KW-1015">Disulfide bond</keyword>
<keyword id="KW-0297">G-protein coupled receptor</keyword>
<keyword id="KW-0325">Glycoprotein</keyword>
<keyword id="KW-0472">Membrane</keyword>
<keyword id="KW-0597">Phosphoprotein</keyword>
<keyword id="KW-0600">Photoreceptor protein</keyword>
<keyword id="KW-0675">Receptor</keyword>
<keyword id="KW-0681">Retinal protein</keyword>
<keyword id="KW-0716">Sensory transduction</keyword>
<keyword id="KW-0807">Transducer</keyword>
<keyword id="KW-0812">Transmembrane</keyword>
<keyword id="KW-1133">Transmembrane helix</keyword>
<keyword id="KW-0844">Vision</keyword>